<name>MURG_BORAP</name>
<evidence type="ECO:0000255" key="1">
    <source>
        <dbReference type="HAMAP-Rule" id="MF_00033"/>
    </source>
</evidence>
<dbReference type="EC" id="2.4.1.227" evidence="1"/>
<dbReference type="EMBL" id="CP000395">
    <property type="protein sequence ID" value="ABH02040.1"/>
    <property type="molecule type" value="Genomic_DNA"/>
</dbReference>
<dbReference type="EMBL" id="CP002933">
    <property type="protein sequence ID" value="AEL69982.1"/>
    <property type="molecule type" value="Genomic_DNA"/>
</dbReference>
<dbReference type="RefSeq" id="WP_011601212.1">
    <property type="nucleotide sequence ID" value="NC_008277.1"/>
</dbReference>
<dbReference type="SMR" id="Q0SM88"/>
<dbReference type="STRING" id="29518.BLA32_00395"/>
<dbReference type="CAZy" id="GT28">
    <property type="family name" value="Glycosyltransferase Family 28"/>
</dbReference>
<dbReference type="KEGG" id="baf:BAPKO_0815"/>
<dbReference type="KEGG" id="bafz:BafPKo_0792"/>
<dbReference type="PATRIC" id="fig|390236.22.peg.755"/>
<dbReference type="eggNOG" id="COG0707">
    <property type="taxonomic scope" value="Bacteria"/>
</dbReference>
<dbReference type="HOGENOM" id="CLU_037404_0_0_12"/>
<dbReference type="OrthoDB" id="9808936at2"/>
<dbReference type="UniPathway" id="UPA00219"/>
<dbReference type="Proteomes" id="UP000005216">
    <property type="component" value="Chromosome"/>
</dbReference>
<dbReference type="GO" id="GO:0005886">
    <property type="term" value="C:plasma membrane"/>
    <property type="evidence" value="ECO:0007669"/>
    <property type="project" value="UniProtKB-SubCell"/>
</dbReference>
<dbReference type="GO" id="GO:0051991">
    <property type="term" value="F:UDP-N-acetyl-D-glucosamine:N-acetylmuramoyl-L-alanyl-D-glutamyl-meso-2,6-diaminopimelyl-D-alanyl-D-alanine-diphosphoundecaprenol 4-beta-N-acetylglucosaminlytransferase activity"/>
    <property type="evidence" value="ECO:0007669"/>
    <property type="project" value="RHEA"/>
</dbReference>
<dbReference type="GO" id="GO:0050511">
    <property type="term" value="F:undecaprenyldiphospho-muramoylpentapeptide beta-N-acetylglucosaminyltransferase activity"/>
    <property type="evidence" value="ECO:0007669"/>
    <property type="project" value="UniProtKB-UniRule"/>
</dbReference>
<dbReference type="GO" id="GO:0005975">
    <property type="term" value="P:carbohydrate metabolic process"/>
    <property type="evidence" value="ECO:0007669"/>
    <property type="project" value="InterPro"/>
</dbReference>
<dbReference type="GO" id="GO:0051301">
    <property type="term" value="P:cell division"/>
    <property type="evidence" value="ECO:0007669"/>
    <property type="project" value="UniProtKB-KW"/>
</dbReference>
<dbReference type="GO" id="GO:0071555">
    <property type="term" value="P:cell wall organization"/>
    <property type="evidence" value="ECO:0007669"/>
    <property type="project" value="UniProtKB-KW"/>
</dbReference>
<dbReference type="GO" id="GO:0030259">
    <property type="term" value="P:lipid glycosylation"/>
    <property type="evidence" value="ECO:0007669"/>
    <property type="project" value="UniProtKB-UniRule"/>
</dbReference>
<dbReference type="GO" id="GO:0009252">
    <property type="term" value="P:peptidoglycan biosynthetic process"/>
    <property type="evidence" value="ECO:0007669"/>
    <property type="project" value="UniProtKB-UniRule"/>
</dbReference>
<dbReference type="GO" id="GO:0008360">
    <property type="term" value="P:regulation of cell shape"/>
    <property type="evidence" value="ECO:0007669"/>
    <property type="project" value="UniProtKB-KW"/>
</dbReference>
<dbReference type="CDD" id="cd03785">
    <property type="entry name" value="GT28_MurG"/>
    <property type="match status" value="1"/>
</dbReference>
<dbReference type="Gene3D" id="3.40.50.2000">
    <property type="entry name" value="Glycogen Phosphorylase B"/>
    <property type="match status" value="2"/>
</dbReference>
<dbReference type="HAMAP" id="MF_00033">
    <property type="entry name" value="MurG"/>
    <property type="match status" value="1"/>
</dbReference>
<dbReference type="InterPro" id="IPR006009">
    <property type="entry name" value="GlcNAc_MurG"/>
</dbReference>
<dbReference type="InterPro" id="IPR007235">
    <property type="entry name" value="Glyco_trans_28_C"/>
</dbReference>
<dbReference type="InterPro" id="IPR004276">
    <property type="entry name" value="GlycoTrans_28_N"/>
</dbReference>
<dbReference type="NCBIfam" id="TIGR01133">
    <property type="entry name" value="murG"/>
    <property type="match status" value="1"/>
</dbReference>
<dbReference type="PANTHER" id="PTHR21015:SF27">
    <property type="entry name" value="UDP-N-ACETYLGLUCOSAMINE--N-ACETYLMURAMYL-(PENTAPEPTIDE) PYROPHOSPHORYL-UNDECAPRENOL N-ACETYLGLUCOSAMINE TRANSFERASE"/>
    <property type="match status" value="1"/>
</dbReference>
<dbReference type="PANTHER" id="PTHR21015">
    <property type="entry name" value="UDP-N-ACETYLGLUCOSAMINE--N-ACETYLMURAMYL-(PENTAPEPTIDE) PYROPHOSPHORYL-UNDECAPRENOL N-ACETYLGLUCOSAMINE TRANSFERASE 1"/>
    <property type="match status" value="1"/>
</dbReference>
<dbReference type="Pfam" id="PF04101">
    <property type="entry name" value="Glyco_tran_28_C"/>
    <property type="match status" value="1"/>
</dbReference>
<dbReference type="Pfam" id="PF03033">
    <property type="entry name" value="Glyco_transf_28"/>
    <property type="match status" value="1"/>
</dbReference>
<dbReference type="SUPFAM" id="SSF53756">
    <property type="entry name" value="UDP-Glycosyltransferase/glycogen phosphorylase"/>
    <property type="match status" value="1"/>
</dbReference>
<comment type="function">
    <text evidence="1">Cell wall formation. Catalyzes the transfer of a GlcNAc subunit on undecaprenyl-pyrophosphoryl-MurNAc-pentapeptide (lipid intermediate I) to form undecaprenyl-pyrophosphoryl-MurNAc-(pentapeptide)GlcNAc (lipid intermediate II).</text>
</comment>
<comment type="catalytic activity">
    <reaction evidence="1">
        <text>di-trans,octa-cis-undecaprenyl diphospho-N-acetyl-alpha-D-muramoyl-L-alanyl-D-glutamyl-meso-2,6-diaminopimeloyl-D-alanyl-D-alanine + UDP-N-acetyl-alpha-D-glucosamine = di-trans,octa-cis-undecaprenyl diphospho-[N-acetyl-alpha-D-glucosaminyl-(1-&gt;4)]-N-acetyl-alpha-D-muramoyl-L-alanyl-D-glutamyl-meso-2,6-diaminopimeloyl-D-alanyl-D-alanine + UDP + H(+)</text>
        <dbReference type="Rhea" id="RHEA:31227"/>
        <dbReference type="ChEBI" id="CHEBI:15378"/>
        <dbReference type="ChEBI" id="CHEBI:57705"/>
        <dbReference type="ChEBI" id="CHEBI:58223"/>
        <dbReference type="ChEBI" id="CHEBI:61387"/>
        <dbReference type="ChEBI" id="CHEBI:61388"/>
        <dbReference type="EC" id="2.4.1.227"/>
    </reaction>
</comment>
<comment type="pathway">
    <text evidence="1">Cell wall biogenesis; peptidoglycan biosynthesis.</text>
</comment>
<comment type="subcellular location">
    <subcellularLocation>
        <location evidence="1">Cell inner membrane</location>
        <topology evidence="1">Peripheral membrane protein</topology>
        <orientation evidence="1">Cytoplasmic side</orientation>
    </subcellularLocation>
</comment>
<comment type="similarity">
    <text evidence="1">Belongs to the glycosyltransferase 28 family. MurG subfamily.</text>
</comment>
<sequence>MSNKKIIFFTGGGTGGHIFPGISIIQKLKELDNEIEFFWIGKKNSIEEKLIKEQNNIKFISIPCGKLRRYFSFQNFTDFFKVIFGIIKSFYILKKYKPQIVYATGGFVSTPTIIASSLLKIKRITHEMDLDPGLATKINSKFANKIYISFKESEKYFKNHKNIIHTGSPIRKEFLTPNPKIIKQLTQNTNKPIVSILGGSLGANALNNLALCIKKDAEIYFIHQSGKNLNDLREDNYIRRQFFNAEEMASIVKFSNIIISRAGAGAIKEFANACTCTILIPFKKGSRGDQIKNAKLLKTQNACIYIDEDEILNANILKIIKETLKDKEKINTLKANIKKFNNKNSSALIAQLLIKDIKETKSK</sequence>
<accession>Q0SM88</accession>
<accession>G0IRU7</accession>
<keyword id="KW-0131">Cell cycle</keyword>
<keyword id="KW-0132">Cell division</keyword>
<keyword id="KW-0997">Cell inner membrane</keyword>
<keyword id="KW-1003">Cell membrane</keyword>
<keyword id="KW-0133">Cell shape</keyword>
<keyword id="KW-0961">Cell wall biogenesis/degradation</keyword>
<keyword id="KW-0328">Glycosyltransferase</keyword>
<keyword id="KW-0472">Membrane</keyword>
<keyword id="KW-0573">Peptidoglycan synthesis</keyword>
<keyword id="KW-0808">Transferase</keyword>
<organism>
    <name type="scientific">Borreliella afzelii (strain PKo)</name>
    <name type="common">Borrelia afzelii</name>
    <dbReference type="NCBI Taxonomy" id="390236"/>
    <lineage>
        <taxon>Bacteria</taxon>
        <taxon>Pseudomonadati</taxon>
        <taxon>Spirochaetota</taxon>
        <taxon>Spirochaetia</taxon>
        <taxon>Spirochaetales</taxon>
        <taxon>Borreliaceae</taxon>
        <taxon>Borreliella</taxon>
    </lineage>
</organism>
<protein>
    <recommendedName>
        <fullName evidence="1">UDP-N-acetylglucosamine--N-acetylmuramyl-(pentapeptide) pyrophosphoryl-undecaprenol N-acetylglucosamine transferase</fullName>
        <ecNumber evidence="1">2.4.1.227</ecNumber>
    </recommendedName>
    <alternativeName>
        <fullName evidence="1">Undecaprenyl-PP-MurNAc-pentapeptide-UDPGlcNAc GlcNAc transferase</fullName>
    </alternativeName>
</protein>
<feature type="chain" id="PRO_1000002620" description="UDP-N-acetylglucosamine--N-acetylmuramyl-(pentapeptide) pyrophosphoryl-undecaprenol N-acetylglucosamine transferase">
    <location>
        <begin position="1"/>
        <end position="363"/>
    </location>
</feature>
<feature type="binding site" evidence="1">
    <location>
        <begin position="14"/>
        <end position="16"/>
    </location>
    <ligand>
        <name>UDP-N-acetyl-alpha-D-glucosamine</name>
        <dbReference type="ChEBI" id="CHEBI:57705"/>
    </ligand>
</feature>
<feature type="binding site" evidence="1">
    <location>
        <position position="171"/>
    </location>
    <ligand>
        <name>UDP-N-acetyl-alpha-D-glucosamine</name>
        <dbReference type="ChEBI" id="CHEBI:57705"/>
    </ligand>
</feature>
<feature type="binding site" evidence="1">
    <location>
        <position position="200"/>
    </location>
    <ligand>
        <name>UDP-N-acetyl-alpha-D-glucosamine</name>
        <dbReference type="ChEBI" id="CHEBI:57705"/>
    </ligand>
</feature>
<feature type="binding site" evidence="1">
    <location>
        <position position="290"/>
    </location>
    <ligand>
        <name>UDP-N-acetyl-alpha-D-glucosamine</name>
        <dbReference type="ChEBI" id="CHEBI:57705"/>
    </ligand>
</feature>
<proteinExistence type="inferred from homology"/>
<gene>
    <name evidence="1" type="primary">murG</name>
    <name type="ordered locus">BAPKO_0815</name>
    <name type="ordered locus">BafPKo_0792</name>
</gene>
<reference key="1">
    <citation type="journal article" date="2006" name="BMC Genomics">
        <title>Comparative genome analysis: selection pressure on the Borrelia vls cassettes is essential for infectivity.</title>
        <authorList>
            <person name="Gloeckner G."/>
            <person name="Schulte-Spechtel U."/>
            <person name="Schilhabel M."/>
            <person name="Felder M."/>
            <person name="Suehnel J."/>
            <person name="Wilske B."/>
            <person name="Platzer M."/>
        </authorList>
    </citation>
    <scope>NUCLEOTIDE SEQUENCE [LARGE SCALE GENOMIC DNA]</scope>
    <source>
        <strain>PKo</strain>
    </source>
</reference>
<reference key="2">
    <citation type="journal article" date="2011" name="J. Bacteriol.">
        <title>Whole-genome sequences of two Borrelia afzelii and two Borrelia garinii Lyme disease agent isolates.</title>
        <authorList>
            <person name="Casjens S.R."/>
            <person name="Mongodin E.F."/>
            <person name="Qiu W.G."/>
            <person name="Dunn J.J."/>
            <person name="Luft B.J."/>
            <person name="Fraser-Liggett C.M."/>
            <person name="Schutzer S.E."/>
        </authorList>
    </citation>
    <scope>NUCLEOTIDE SEQUENCE [LARGE SCALE GENOMIC DNA]</scope>
    <source>
        <strain>PKo</strain>
    </source>
</reference>